<reference key="1">
    <citation type="journal article" date="2005" name="Nature">
        <title>The DNA sequence of the human X chromosome.</title>
        <authorList>
            <person name="Ross M.T."/>
            <person name="Grafham D.V."/>
            <person name="Coffey A.J."/>
            <person name="Scherer S."/>
            <person name="McLay K."/>
            <person name="Muzny D."/>
            <person name="Platzer M."/>
            <person name="Howell G.R."/>
            <person name="Burrows C."/>
            <person name="Bird C.P."/>
            <person name="Frankish A."/>
            <person name="Lovell F.L."/>
            <person name="Howe K.L."/>
            <person name="Ashurst J.L."/>
            <person name="Fulton R.S."/>
            <person name="Sudbrak R."/>
            <person name="Wen G."/>
            <person name="Jones M.C."/>
            <person name="Hurles M.E."/>
            <person name="Andrews T.D."/>
            <person name="Scott C.E."/>
            <person name="Searle S."/>
            <person name="Ramser J."/>
            <person name="Whittaker A."/>
            <person name="Deadman R."/>
            <person name="Carter N.P."/>
            <person name="Hunt S.E."/>
            <person name="Chen R."/>
            <person name="Cree A."/>
            <person name="Gunaratne P."/>
            <person name="Havlak P."/>
            <person name="Hodgson A."/>
            <person name="Metzker M.L."/>
            <person name="Richards S."/>
            <person name="Scott G."/>
            <person name="Steffen D."/>
            <person name="Sodergren E."/>
            <person name="Wheeler D.A."/>
            <person name="Worley K.C."/>
            <person name="Ainscough R."/>
            <person name="Ambrose K.D."/>
            <person name="Ansari-Lari M.A."/>
            <person name="Aradhya S."/>
            <person name="Ashwell R.I."/>
            <person name="Babbage A.K."/>
            <person name="Bagguley C.L."/>
            <person name="Ballabio A."/>
            <person name="Banerjee R."/>
            <person name="Barker G.E."/>
            <person name="Barlow K.F."/>
            <person name="Barrett I.P."/>
            <person name="Bates K.N."/>
            <person name="Beare D.M."/>
            <person name="Beasley H."/>
            <person name="Beasley O."/>
            <person name="Beck A."/>
            <person name="Bethel G."/>
            <person name="Blechschmidt K."/>
            <person name="Brady N."/>
            <person name="Bray-Allen S."/>
            <person name="Bridgeman A.M."/>
            <person name="Brown A.J."/>
            <person name="Brown M.J."/>
            <person name="Bonnin D."/>
            <person name="Bruford E.A."/>
            <person name="Buhay C."/>
            <person name="Burch P."/>
            <person name="Burford D."/>
            <person name="Burgess J."/>
            <person name="Burrill W."/>
            <person name="Burton J."/>
            <person name="Bye J.M."/>
            <person name="Carder C."/>
            <person name="Carrel L."/>
            <person name="Chako J."/>
            <person name="Chapman J.C."/>
            <person name="Chavez D."/>
            <person name="Chen E."/>
            <person name="Chen G."/>
            <person name="Chen Y."/>
            <person name="Chen Z."/>
            <person name="Chinault C."/>
            <person name="Ciccodicola A."/>
            <person name="Clark S.Y."/>
            <person name="Clarke G."/>
            <person name="Clee C.M."/>
            <person name="Clegg S."/>
            <person name="Clerc-Blankenburg K."/>
            <person name="Clifford K."/>
            <person name="Cobley V."/>
            <person name="Cole C.G."/>
            <person name="Conquer J.S."/>
            <person name="Corby N."/>
            <person name="Connor R.E."/>
            <person name="David R."/>
            <person name="Davies J."/>
            <person name="Davis C."/>
            <person name="Davis J."/>
            <person name="Delgado O."/>
            <person name="Deshazo D."/>
            <person name="Dhami P."/>
            <person name="Ding Y."/>
            <person name="Dinh H."/>
            <person name="Dodsworth S."/>
            <person name="Draper H."/>
            <person name="Dugan-Rocha S."/>
            <person name="Dunham A."/>
            <person name="Dunn M."/>
            <person name="Durbin K.J."/>
            <person name="Dutta I."/>
            <person name="Eades T."/>
            <person name="Ellwood M."/>
            <person name="Emery-Cohen A."/>
            <person name="Errington H."/>
            <person name="Evans K.L."/>
            <person name="Faulkner L."/>
            <person name="Francis F."/>
            <person name="Frankland J."/>
            <person name="Fraser A.E."/>
            <person name="Galgoczy P."/>
            <person name="Gilbert J."/>
            <person name="Gill R."/>
            <person name="Gloeckner G."/>
            <person name="Gregory S.G."/>
            <person name="Gribble S."/>
            <person name="Griffiths C."/>
            <person name="Grocock R."/>
            <person name="Gu Y."/>
            <person name="Gwilliam R."/>
            <person name="Hamilton C."/>
            <person name="Hart E.A."/>
            <person name="Hawes A."/>
            <person name="Heath P.D."/>
            <person name="Heitmann K."/>
            <person name="Hennig S."/>
            <person name="Hernandez J."/>
            <person name="Hinzmann B."/>
            <person name="Ho S."/>
            <person name="Hoffs M."/>
            <person name="Howden P.J."/>
            <person name="Huckle E.J."/>
            <person name="Hume J."/>
            <person name="Hunt P.J."/>
            <person name="Hunt A.R."/>
            <person name="Isherwood J."/>
            <person name="Jacob L."/>
            <person name="Johnson D."/>
            <person name="Jones S."/>
            <person name="de Jong P.J."/>
            <person name="Joseph S.S."/>
            <person name="Keenan S."/>
            <person name="Kelly S."/>
            <person name="Kershaw J.K."/>
            <person name="Khan Z."/>
            <person name="Kioschis P."/>
            <person name="Klages S."/>
            <person name="Knights A.J."/>
            <person name="Kosiura A."/>
            <person name="Kovar-Smith C."/>
            <person name="Laird G.K."/>
            <person name="Langford C."/>
            <person name="Lawlor S."/>
            <person name="Leversha M."/>
            <person name="Lewis L."/>
            <person name="Liu W."/>
            <person name="Lloyd C."/>
            <person name="Lloyd D.M."/>
            <person name="Loulseged H."/>
            <person name="Loveland J.E."/>
            <person name="Lovell J.D."/>
            <person name="Lozado R."/>
            <person name="Lu J."/>
            <person name="Lyne R."/>
            <person name="Ma J."/>
            <person name="Maheshwari M."/>
            <person name="Matthews L.H."/>
            <person name="McDowall J."/>
            <person name="McLaren S."/>
            <person name="McMurray A."/>
            <person name="Meidl P."/>
            <person name="Meitinger T."/>
            <person name="Milne S."/>
            <person name="Miner G."/>
            <person name="Mistry S.L."/>
            <person name="Morgan M."/>
            <person name="Morris S."/>
            <person name="Mueller I."/>
            <person name="Mullikin J.C."/>
            <person name="Nguyen N."/>
            <person name="Nordsiek G."/>
            <person name="Nyakatura G."/>
            <person name="O'dell C.N."/>
            <person name="Okwuonu G."/>
            <person name="Palmer S."/>
            <person name="Pandian R."/>
            <person name="Parker D."/>
            <person name="Parrish J."/>
            <person name="Pasternak S."/>
            <person name="Patel D."/>
            <person name="Pearce A.V."/>
            <person name="Pearson D.M."/>
            <person name="Pelan S.E."/>
            <person name="Perez L."/>
            <person name="Porter K.M."/>
            <person name="Ramsey Y."/>
            <person name="Reichwald K."/>
            <person name="Rhodes S."/>
            <person name="Ridler K.A."/>
            <person name="Schlessinger D."/>
            <person name="Schueler M.G."/>
            <person name="Sehra H.K."/>
            <person name="Shaw-Smith C."/>
            <person name="Shen H."/>
            <person name="Sheridan E.M."/>
            <person name="Shownkeen R."/>
            <person name="Skuce C.D."/>
            <person name="Smith M.L."/>
            <person name="Sotheran E.C."/>
            <person name="Steingruber H.E."/>
            <person name="Steward C.A."/>
            <person name="Storey R."/>
            <person name="Swann R.M."/>
            <person name="Swarbreck D."/>
            <person name="Tabor P.E."/>
            <person name="Taudien S."/>
            <person name="Taylor T."/>
            <person name="Teague B."/>
            <person name="Thomas K."/>
            <person name="Thorpe A."/>
            <person name="Timms K."/>
            <person name="Tracey A."/>
            <person name="Trevanion S."/>
            <person name="Tromans A.C."/>
            <person name="d'Urso M."/>
            <person name="Verduzco D."/>
            <person name="Villasana D."/>
            <person name="Waldron L."/>
            <person name="Wall M."/>
            <person name="Wang Q."/>
            <person name="Warren J."/>
            <person name="Warry G.L."/>
            <person name="Wei X."/>
            <person name="West A."/>
            <person name="Whitehead S.L."/>
            <person name="Whiteley M.N."/>
            <person name="Wilkinson J.E."/>
            <person name="Willey D.L."/>
            <person name="Williams G."/>
            <person name="Williams L."/>
            <person name="Williamson A."/>
            <person name="Williamson H."/>
            <person name="Wilming L."/>
            <person name="Woodmansey R.L."/>
            <person name="Wray P.W."/>
            <person name="Yen J."/>
            <person name="Zhang J."/>
            <person name="Zhou J."/>
            <person name="Zoghbi H."/>
            <person name="Zorilla S."/>
            <person name="Buck D."/>
            <person name="Reinhardt R."/>
            <person name="Poustka A."/>
            <person name="Rosenthal A."/>
            <person name="Lehrach H."/>
            <person name="Meindl A."/>
            <person name="Minx P.J."/>
            <person name="Hillier L.W."/>
            <person name="Willard H.F."/>
            <person name="Wilson R.K."/>
            <person name="Waterston R.H."/>
            <person name="Rice C.M."/>
            <person name="Vaudin M."/>
            <person name="Coulson A."/>
            <person name="Nelson D.L."/>
            <person name="Weinstock G."/>
            <person name="Sulston J.E."/>
            <person name="Durbin R.M."/>
            <person name="Hubbard T."/>
            <person name="Gibbs R.A."/>
            <person name="Beck S."/>
            <person name="Rogers J."/>
            <person name="Bentley D.R."/>
        </authorList>
    </citation>
    <scope>NUCLEOTIDE SEQUENCE [LARGE SCALE GENOMIC DNA]</scope>
</reference>
<reference key="2">
    <citation type="journal article" date="2003" name="DNA Res.">
        <title>Characterization of long cDNA clones from human adult spleen. II. The complete sequences of 81 cDNA clones.</title>
        <authorList>
            <person name="Jikuya H."/>
            <person name="Takano J."/>
            <person name="Kikuno R."/>
            <person name="Hirosawa M."/>
            <person name="Nagase T."/>
            <person name="Nomura N."/>
            <person name="Ohara O."/>
        </authorList>
    </citation>
    <scope>NUCLEOTIDE SEQUENCE [LARGE SCALE MRNA] OF 16-1785 (ISOFORM 1)</scope>
    <source>
        <tissue>Spleen</tissue>
    </source>
</reference>
<reference key="3">
    <citation type="submission" date="1999-07" db="EMBL/GenBank/DDBJ databases">
        <authorList>
            <person name="Rhodes S."/>
        </authorList>
    </citation>
    <scope>NUCLEOTIDE SEQUENCE [LARGE SCALE MRNA] OF 566-1435 (ISOFORM 4)</scope>
</reference>
<reference key="4">
    <citation type="journal article" date="2004" name="Nat. Genet.">
        <title>Complete sequencing and characterization of 21,243 full-length human cDNAs.</title>
        <authorList>
            <person name="Ota T."/>
            <person name="Suzuki Y."/>
            <person name="Nishikawa T."/>
            <person name="Otsuki T."/>
            <person name="Sugiyama T."/>
            <person name="Irie R."/>
            <person name="Wakamatsu A."/>
            <person name="Hayashi K."/>
            <person name="Sato H."/>
            <person name="Nagai K."/>
            <person name="Kimura K."/>
            <person name="Makita H."/>
            <person name="Sekine M."/>
            <person name="Obayashi M."/>
            <person name="Nishi T."/>
            <person name="Shibahara T."/>
            <person name="Tanaka T."/>
            <person name="Ishii S."/>
            <person name="Yamamoto J."/>
            <person name="Saito K."/>
            <person name="Kawai Y."/>
            <person name="Isono Y."/>
            <person name="Nakamura Y."/>
            <person name="Nagahari K."/>
            <person name="Murakami K."/>
            <person name="Yasuda T."/>
            <person name="Iwayanagi T."/>
            <person name="Wagatsuma M."/>
            <person name="Shiratori A."/>
            <person name="Sudo H."/>
            <person name="Hosoiri T."/>
            <person name="Kaku Y."/>
            <person name="Kodaira H."/>
            <person name="Kondo H."/>
            <person name="Sugawara M."/>
            <person name="Takahashi M."/>
            <person name="Kanda K."/>
            <person name="Yokoi T."/>
            <person name="Furuya T."/>
            <person name="Kikkawa E."/>
            <person name="Omura Y."/>
            <person name="Abe K."/>
            <person name="Kamihara K."/>
            <person name="Katsuta N."/>
            <person name="Sato K."/>
            <person name="Tanikawa M."/>
            <person name="Yamazaki M."/>
            <person name="Ninomiya K."/>
            <person name="Ishibashi T."/>
            <person name="Yamashita H."/>
            <person name="Murakawa K."/>
            <person name="Fujimori K."/>
            <person name="Tanai H."/>
            <person name="Kimata M."/>
            <person name="Watanabe M."/>
            <person name="Hiraoka S."/>
            <person name="Chiba Y."/>
            <person name="Ishida S."/>
            <person name="Ono Y."/>
            <person name="Takiguchi S."/>
            <person name="Watanabe S."/>
            <person name="Yosida M."/>
            <person name="Hotuta T."/>
            <person name="Kusano J."/>
            <person name="Kanehori K."/>
            <person name="Takahashi-Fujii A."/>
            <person name="Hara H."/>
            <person name="Tanase T.-O."/>
            <person name="Nomura Y."/>
            <person name="Togiya S."/>
            <person name="Komai F."/>
            <person name="Hara R."/>
            <person name="Takeuchi K."/>
            <person name="Arita M."/>
            <person name="Imose N."/>
            <person name="Musashino K."/>
            <person name="Yuuki H."/>
            <person name="Oshima A."/>
            <person name="Sasaki N."/>
            <person name="Aotsuka S."/>
            <person name="Yoshikawa Y."/>
            <person name="Matsunawa H."/>
            <person name="Ichihara T."/>
            <person name="Shiohata N."/>
            <person name="Sano S."/>
            <person name="Moriya S."/>
            <person name="Momiyama H."/>
            <person name="Satoh N."/>
            <person name="Takami S."/>
            <person name="Terashima Y."/>
            <person name="Suzuki O."/>
            <person name="Nakagawa S."/>
            <person name="Senoh A."/>
            <person name="Mizoguchi H."/>
            <person name="Goto Y."/>
            <person name="Shimizu F."/>
            <person name="Wakebe H."/>
            <person name="Hishigaki H."/>
            <person name="Watanabe T."/>
            <person name="Sugiyama A."/>
            <person name="Takemoto M."/>
            <person name="Kawakami B."/>
            <person name="Yamazaki M."/>
            <person name="Watanabe K."/>
            <person name="Kumagai A."/>
            <person name="Itakura S."/>
            <person name="Fukuzumi Y."/>
            <person name="Fujimori Y."/>
            <person name="Komiyama M."/>
            <person name="Tashiro H."/>
            <person name="Tanigami A."/>
            <person name="Fujiwara T."/>
            <person name="Ono T."/>
            <person name="Yamada K."/>
            <person name="Fujii Y."/>
            <person name="Ozaki K."/>
            <person name="Hirao M."/>
            <person name="Ohmori Y."/>
            <person name="Kawabata A."/>
            <person name="Hikiji T."/>
            <person name="Kobatake N."/>
            <person name="Inagaki H."/>
            <person name="Ikema Y."/>
            <person name="Okamoto S."/>
            <person name="Okitani R."/>
            <person name="Kawakami T."/>
            <person name="Noguchi S."/>
            <person name="Itoh T."/>
            <person name="Shigeta K."/>
            <person name="Senba T."/>
            <person name="Matsumura K."/>
            <person name="Nakajima Y."/>
            <person name="Mizuno T."/>
            <person name="Morinaga M."/>
            <person name="Sasaki M."/>
            <person name="Togashi T."/>
            <person name="Oyama M."/>
            <person name="Hata H."/>
            <person name="Watanabe M."/>
            <person name="Komatsu T."/>
            <person name="Mizushima-Sugano J."/>
            <person name="Satoh T."/>
            <person name="Shirai Y."/>
            <person name="Takahashi Y."/>
            <person name="Nakagawa K."/>
            <person name="Okumura K."/>
            <person name="Nagase T."/>
            <person name="Nomura N."/>
            <person name="Kikuchi H."/>
            <person name="Masuho Y."/>
            <person name="Yamashita R."/>
            <person name="Nakai K."/>
            <person name="Yada T."/>
            <person name="Nakamura Y."/>
            <person name="Ohara O."/>
            <person name="Isogai T."/>
            <person name="Sugano S."/>
        </authorList>
    </citation>
    <scope>NUCLEOTIDE SEQUENCE [LARGE SCALE MRNA] OF 1265-1785 (ISOFORM 3)</scope>
    <source>
        <tissue>Amygdala</tissue>
    </source>
</reference>
<reference key="5">
    <citation type="journal article" date="2007" name="J. Biol. Chem.">
        <title>A novel corepressor, BCoR-L1, represses transcription through an interaction with CtBP.</title>
        <authorList>
            <person name="Pagan J.K."/>
            <person name="Arnold J."/>
            <person name="Hanchard K.J."/>
            <person name="Kumar R."/>
            <person name="Bruno T."/>
            <person name="Jones M.J."/>
            <person name="Richard D.J."/>
            <person name="Forrest A."/>
            <person name="Spurdle A."/>
            <person name="Verdin E."/>
            <person name="Crossley M."/>
            <person name="Fanciulli M."/>
            <person name="Chenevix-Trench G."/>
            <person name="Young D.B."/>
            <person name="Khanna K.K."/>
        </authorList>
    </citation>
    <scope>FUNCTION</scope>
    <scope>SUBCELLULAR LOCATION</scope>
    <scope>INTERACTION WITH CTBP1; HDAC4; HDAC5 AND HDAC7</scope>
    <scope>MUTAGENESIS OF 623-ASP-LEU-624</scope>
    <scope>TISSUE SPECIFICITY</scope>
</reference>
<reference key="6">
    <citation type="journal article" date="2008" name="Proc. Natl. Acad. Sci. U.S.A.">
        <title>A quantitative atlas of mitotic phosphorylation.</title>
        <authorList>
            <person name="Dephoure N."/>
            <person name="Zhou C."/>
            <person name="Villen J."/>
            <person name="Beausoleil S.A."/>
            <person name="Bakalarski C.E."/>
            <person name="Elledge S.J."/>
            <person name="Gygi S.P."/>
        </authorList>
    </citation>
    <scope>PHOSPHORYLATION [LARGE SCALE ANALYSIS] AT SER-613; SER-1033; SER-1162 AND SER-1476</scope>
    <scope>IDENTIFICATION BY MASS SPECTROMETRY [LARGE SCALE ANALYSIS]</scope>
    <source>
        <tissue>Cervix carcinoma</tissue>
    </source>
</reference>
<reference key="7">
    <citation type="journal article" date="2013" name="J. Proteome Res.">
        <title>Toward a comprehensive characterization of a human cancer cell phosphoproteome.</title>
        <authorList>
            <person name="Zhou H."/>
            <person name="Di Palma S."/>
            <person name="Preisinger C."/>
            <person name="Peng M."/>
            <person name="Polat A.N."/>
            <person name="Heck A.J."/>
            <person name="Mohammed S."/>
        </authorList>
    </citation>
    <scope>PHOSPHORYLATION [LARGE SCALE ANALYSIS] AT SER-496; SER-599; SER-1029; SER-1033 AND SER-1162</scope>
    <scope>IDENTIFICATION BY MASS SPECTROMETRY [LARGE SCALE ANALYSIS]</scope>
    <source>
        <tissue>Cervix carcinoma</tissue>
        <tissue>Erythroleukemia</tissue>
    </source>
</reference>
<reference key="8">
    <citation type="journal article" date="2014" name="J. Proteomics">
        <title>An enzyme assisted RP-RPLC approach for in-depth analysis of human liver phosphoproteome.</title>
        <authorList>
            <person name="Bian Y."/>
            <person name="Song C."/>
            <person name="Cheng K."/>
            <person name="Dong M."/>
            <person name="Wang F."/>
            <person name="Huang J."/>
            <person name="Sun D."/>
            <person name="Wang L."/>
            <person name="Ye M."/>
            <person name="Zou H."/>
        </authorList>
    </citation>
    <scope>IDENTIFICATION BY MASS SPECTROMETRY [LARGE SCALE ANALYSIS]</scope>
    <source>
        <tissue>Liver</tissue>
    </source>
</reference>
<reference key="9">
    <citation type="journal article" date="2014" name="Nat. Struct. Mol. Biol.">
        <title>Uncovering global SUMOylation signaling networks in a site-specific manner.</title>
        <authorList>
            <person name="Hendriks I.A."/>
            <person name="D'Souza R.C."/>
            <person name="Yang B."/>
            <person name="Verlaan-de Vries M."/>
            <person name="Mann M."/>
            <person name="Vertegaal A.C."/>
        </authorList>
    </citation>
    <scope>SUMOYLATION [LARGE SCALE ANALYSIS] AT LYS-1092</scope>
    <scope>IDENTIFICATION BY MASS SPECTROMETRY [LARGE SCALE ANALYSIS]</scope>
</reference>
<reference key="10">
    <citation type="journal article" date="2015" name="Mol. Cell. Proteomics">
        <title>System-wide analysis of SUMOylation dynamics in response to replication stress reveals novel small ubiquitin-like modified target proteins and acceptor lysines relevant for genome stability.</title>
        <authorList>
            <person name="Xiao Z."/>
            <person name="Chang J.G."/>
            <person name="Hendriks I.A."/>
            <person name="Sigurdsson J.O."/>
            <person name="Olsen J.V."/>
            <person name="Vertegaal A.C."/>
        </authorList>
    </citation>
    <scope>SUMOYLATION [LARGE SCALE ANALYSIS] AT LYS-1092</scope>
    <scope>IDENTIFICATION BY MASS SPECTROMETRY [LARGE SCALE ANALYSIS]</scope>
</reference>
<reference key="11">
    <citation type="journal article" date="2017" name="Nat. Struct. Mol. Biol.">
        <title>Site-specific mapping of the human SUMO proteome reveals co-modification with phosphorylation.</title>
        <authorList>
            <person name="Hendriks I.A."/>
            <person name="Lyon D."/>
            <person name="Young C."/>
            <person name="Jensen L.J."/>
            <person name="Vertegaal A.C."/>
            <person name="Nielsen M.L."/>
        </authorList>
    </citation>
    <scope>SUMOYLATION [LARGE SCALE ANALYSIS] AT LYS-747 AND LYS-1092</scope>
    <scope>IDENTIFICATION BY MASS SPECTROMETRY [LARGE SCALE ANALYSIS]</scope>
</reference>
<reference key="12">
    <citation type="journal article" date="2013" name="Structure">
        <title>Structure of the polycomb group protein PCGF1 in complex with BCOR reveals basis for binding selectivity of PCGF homologs.</title>
        <authorList>
            <person name="Junco S.E."/>
            <person name="Wang R."/>
            <person name="Gaipa J.C."/>
            <person name="Taylor A.B."/>
            <person name="Schirf V."/>
            <person name="Gearhart M.D."/>
            <person name="Bardwell V.J."/>
            <person name="Demeler B."/>
            <person name="Hart P.J."/>
            <person name="Kim C.A."/>
        </authorList>
    </citation>
    <scope>X-RAY CRYSTALLOGRAPHY (2.00 ANGSTROMS) OF 1708-1822 IN COMPLEX WITH PCGF1</scope>
    <scope>INTERACTION WITH PCGF1</scope>
    <scope>MUTAGENESIS OF LEU-1739</scope>
</reference>
<reference evidence="14" key="13">
    <citation type="journal article" date="2016" name="Structure">
        <title>KDM2B Recruitment of the Polycomb Group Complex, PRC1.1, Requires Cooperation between PCGF1 and BCORL1.</title>
        <authorList>
            <person name="Wong S.J."/>
            <person name="Gearhart M.D."/>
            <person name="Taylor A.B."/>
            <person name="Nanyes D.R."/>
            <person name="Ha D.J."/>
            <person name="Robinson A.K."/>
            <person name="Artigas J.A."/>
            <person name="Lee O.J."/>
            <person name="Demeler B."/>
            <person name="Hart P.J."/>
            <person name="Bardwell V.J."/>
            <person name="Kim C.A."/>
        </authorList>
    </citation>
    <scope>X-RAY CRYSTALLOGRAPHY (2.55 ANGSTROMS) OF 1668-1785</scope>
    <scope>SUBUNIT</scope>
</reference>
<reference key="14">
    <citation type="journal article" date="2006" name="Science">
        <title>The consensus coding sequences of human breast and colorectal cancers.</title>
        <authorList>
            <person name="Sjoeblom T."/>
            <person name="Jones S."/>
            <person name="Wood L.D."/>
            <person name="Parsons D.W."/>
            <person name="Lin J."/>
            <person name="Barber T.D."/>
            <person name="Mandelker D."/>
            <person name="Leary R.J."/>
            <person name="Ptak J."/>
            <person name="Silliman N."/>
            <person name="Szabo S."/>
            <person name="Buckhaults P."/>
            <person name="Farrell C."/>
            <person name="Meeh P."/>
            <person name="Markowitz S.D."/>
            <person name="Willis J."/>
            <person name="Dawson D."/>
            <person name="Willson J.K.V."/>
            <person name="Gazdar A.F."/>
            <person name="Hartigan J."/>
            <person name="Wu L."/>
            <person name="Liu C."/>
            <person name="Parmigiani G."/>
            <person name="Park B.H."/>
            <person name="Bachman K.E."/>
            <person name="Papadopoulos N."/>
            <person name="Vogelstein B."/>
            <person name="Kinzler K.W."/>
            <person name="Velculescu V.E."/>
        </authorList>
    </citation>
    <scope>VARIANT [LARGE SCALE ANALYSIS] ASP-832</scope>
</reference>
<reference key="15">
    <citation type="journal article" date="2013" name="J. Med. Genet.">
        <title>Identification of pathogenic gene variants in small families with intellectually disabled siblings by exome sequencing.</title>
        <authorList>
            <person name="Schuurs-Hoeijmakers J.H."/>
            <person name="Vulto-van Silfhout A.T."/>
            <person name="Vissers L.E."/>
            <person name="van de Vondervoort I.I."/>
            <person name="van Bon B.W."/>
            <person name="de Ligt J."/>
            <person name="Gilissen C."/>
            <person name="Hehir-Kwa J.Y."/>
            <person name="Neveling K."/>
            <person name="del Rosario M."/>
            <person name="Hira G."/>
            <person name="Reitano S."/>
            <person name="Vitello A."/>
            <person name="Failla P."/>
            <person name="Greco D."/>
            <person name="Fichera M."/>
            <person name="Galesi O."/>
            <person name="Kleefstra T."/>
            <person name="Greally M.T."/>
            <person name="Ockeloen C.W."/>
            <person name="Willemsen M.H."/>
            <person name="Bongers E.M."/>
            <person name="Janssen I.M."/>
            <person name="Pfundt R."/>
            <person name="Veltman J.A."/>
            <person name="Romano C."/>
            <person name="Willemsen M.A."/>
            <person name="van Bokhoven H."/>
            <person name="Brunner H.G."/>
            <person name="de Vries B.B."/>
            <person name="de Brouwer A.P."/>
        </authorList>
    </citation>
    <scope>VARIANT SHUVER SER-820</scope>
    <scope>INVOLVEMENT IN SHUVER</scope>
</reference>
<reference key="16">
    <citation type="journal article" date="2016" name="Circ. Cardiovasc. Genet.">
        <title>Exome sequencing identified a splice site mutation in FHL1 that causes Uruguay Syndrome, an X-linked disorder with skeletal muscle hypertrophy and premature cardiac death.</title>
        <authorList>
            <person name="Xue Y."/>
            <person name="Schoser B."/>
            <person name="Rao A.R."/>
            <person name="Quadrelli R."/>
            <person name="Vaglio A."/>
            <person name="Rupp V."/>
            <person name="Beichler C."/>
            <person name="Nelson S.F."/>
            <person name="Schapacher-Tilp G."/>
            <person name="Windpassinger C."/>
            <person name="Wilcox W.R."/>
        </authorList>
    </citation>
    <scope>VARIANT ILE-327</scope>
</reference>
<reference key="17">
    <citation type="journal article" date="2019" name="Am. J. Med. Genet. A">
        <title>Variants in the transcriptional corepressor BCORL1 are associated with an X-linked disorder of intellectual disability, dysmorphic features, and behavioral abnormalities.</title>
        <authorList>
            <person name="Shukla A."/>
            <person name="Girisha K.M."/>
            <person name="Somashekar P.H."/>
            <person name="Nampoothiri S."/>
            <person name="McClellan R."/>
            <person name="Vernon H.J."/>
        </authorList>
    </citation>
    <scope>VARIANTS SHUVER LEU-32; PHE-496 AND GLU-782</scope>
    <scope>INVOLVEMENT IN SHUVER</scope>
</reference>
<reference key="18">
    <citation type="journal article" date="2021" name="J. Med. Genet.">
        <title>Human X chromosome exome sequencing identifies BCORL1 as contributor to spermatogenesis.</title>
        <authorList>
            <person name="Lu C."/>
            <person name="Zhang Y."/>
            <person name="Qin Y."/>
            <person name="Xu Q."/>
            <person name="Zhou R."/>
            <person name="Cui Y."/>
            <person name="Zhu Y."/>
            <person name="Zhang X."/>
            <person name="Zhang J."/>
            <person name="Wei X."/>
            <person name="Wang M."/>
            <person name="Hang B."/>
            <person name="Mao J.H."/>
            <person name="Snijders A.M."/>
            <person name="Liu M."/>
            <person name="Hu Z."/>
            <person name="Shen H."/>
            <person name="Zhou Z."/>
            <person name="Guo X."/>
            <person name="Wu X."/>
            <person name="Wang X."/>
            <person name="Xia Y."/>
        </authorList>
    </citation>
    <scope>VARIANT GLY-872</scope>
</reference>
<reference key="19">
    <citation type="journal article" date="2024" name="Clin. Genet.">
        <title>A hemizygous loss-of-function variant in BCORL1 is associated with male infertility and oligoasthenoteratozoospermia.</title>
        <authorList>
            <person name="Luo C."/>
            <person name="Chen Z."/>
            <person name="Meng L."/>
            <person name="Tan C."/>
            <person name="He W."/>
            <person name="Tu C."/>
            <person name="Du J."/>
            <person name="Lu G.X."/>
            <person name="Lin G."/>
            <person name="Tan Y.Q."/>
            <person name="Hu T.Y."/>
        </authorList>
    </citation>
    <scope>SUBCELLULAR LOCATION</scope>
    <scope>TISSUE SPECIFICITY</scope>
    <scope>VARIANTS 522-GLU--SER-1785 DEL; GLY-872; GLN-890; GLY-1055 AND LEU-1115</scope>
    <scope>CHARACTERIZATION OF VARIANTS 522-GLU--SER-1785 DEL; GLY-872; GLN-890; GLY-1055 AND LEU-1115</scope>
    <scope>INVOLVEMENT IN MALE INFERTILITY</scope>
    <scope>INTERACTION WITH SKP1</scope>
</reference>
<proteinExistence type="evidence at protein level"/>
<gene>
    <name evidence="13" type="primary">BCORL1</name>
</gene>
<name>BCORL_HUMAN</name>
<feature type="chain" id="PRO_0000312268" description="BCL-6 corepressor-like protein 1">
    <location>
        <begin position="1"/>
        <end position="1785"/>
    </location>
</feature>
<feature type="repeat" description="ANK 1">
    <location>
        <begin position="1529"/>
        <end position="1558"/>
    </location>
</feature>
<feature type="repeat" description="ANK 2">
    <location>
        <begin position="1562"/>
        <end position="1591"/>
    </location>
</feature>
<feature type="repeat" description="ANK 3">
    <location>
        <begin position="1595"/>
        <end position="1623"/>
    </location>
</feature>
<feature type="region of interest" description="Disordered" evidence="2">
    <location>
        <begin position="65"/>
        <end position="101"/>
    </location>
</feature>
<feature type="region of interest" description="Disordered" evidence="2">
    <location>
        <begin position="113"/>
        <end position="137"/>
    </location>
</feature>
<feature type="region of interest" description="Disordered" evidence="2">
    <location>
        <begin position="343"/>
        <end position="368"/>
    </location>
</feature>
<feature type="region of interest" description="Disordered" evidence="2">
    <location>
        <begin position="527"/>
        <end position="550"/>
    </location>
</feature>
<feature type="region of interest" description="Disordered" evidence="2">
    <location>
        <begin position="562"/>
        <end position="646"/>
    </location>
</feature>
<feature type="region of interest" description="Disordered" evidence="2">
    <location>
        <begin position="753"/>
        <end position="781"/>
    </location>
</feature>
<feature type="region of interest" description="Disordered" evidence="2">
    <location>
        <begin position="876"/>
        <end position="901"/>
    </location>
</feature>
<feature type="region of interest" description="Disordered" evidence="2">
    <location>
        <begin position="937"/>
        <end position="977"/>
    </location>
</feature>
<feature type="region of interest" description="Disordered" evidence="2">
    <location>
        <begin position="1107"/>
        <end position="1293"/>
    </location>
</feature>
<feature type="region of interest" description="Disordered" evidence="2">
    <location>
        <begin position="1312"/>
        <end position="1487"/>
    </location>
</feature>
<feature type="region of interest" description="PCGF Ub-like fold domain (PUFD); required for the interaction with the KDM2B-SKP1 heterodimeric complex" evidence="8">
    <location>
        <begin position="1668"/>
        <end position="1785"/>
    </location>
</feature>
<feature type="short sequence motif" description="Nuclear localization signal" evidence="1">
    <location>
        <begin position="1328"/>
        <end position="1336"/>
    </location>
</feature>
<feature type="compositionally biased region" description="Basic and acidic residues" evidence="2">
    <location>
        <begin position="83"/>
        <end position="97"/>
    </location>
</feature>
<feature type="compositionally biased region" description="Polar residues" evidence="2">
    <location>
        <begin position="527"/>
        <end position="539"/>
    </location>
</feature>
<feature type="compositionally biased region" description="Polar residues" evidence="2">
    <location>
        <begin position="586"/>
        <end position="600"/>
    </location>
</feature>
<feature type="compositionally biased region" description="Basic residues" evidence="2">
    <location>
        <begin position="1176"/>
        <end position="1185"/>
    </location>
</feature>
<feature type="compositionally biased region" description="Basic and acidic residues" evidence="2">
    <location>
        <begin position="1195"/>
        <end position="1213"/>
    </location>
</feature>
<feature type="compositionally biased region" description="Polar residues" evidence="2">
    <location>
        <begin position="1222"/>
        <end position="1234"/>
    </location>
</feature>
<feature type="compositionally biased region" description="Basic and acidic residues" evidence="2">
    <location>
        <begin position="1271"/>
        <end position="1284"/>
    </location>
</feature>
<feature type="compositionally biased region" description="Acidic residues" evidence="2">
    <location>
        <begin position="1314"/>
        <end position="1324"/>
    </location>
</feature>
<feature type="compositionally biased region" description="Basic residues" evidence="2">
    <location>
        <begin position="1328"/>
        <end position="1339"/>
    </location>
</feature>
<feature type="compositionally biased region" description="Basic and acidic residues" evidence="2">
    <location>
        <begin position="1352"/>
        <end position="1363"/>
    </location>
</feature>
<feature type="compositionally biased region" description="Polar residues" evidence="2">
    <location>
        <begin position="1440"/>
        <end position="1449"/>
    </location>
</feature>
<feature type="compositionally biased region" description="Low complexity" evidence="2">
    <location>
        <begin position="1461"/>
        <end position="1480"/>
    </location>
</feature>
<feature type="modified residue" description="Phosphoserine" evidence="16">
    <location>
        <position position="496"/>
    </location>
</feature>
<feature type="modified residue" description="Phosphoserine" evidence="16">
    <location>
        <position position="599"/>
    </location>
</feature>
<feature type="modified residue" description="Phosphoserine" evidence="15">
    <location>
        <position position="613"/>
    </location>
</feature>
<feature type="modified residue" description="Phosphoserine" evidence="16">
    <location>
        <position position="1029"/>
    </location>
</feature>
<feature type="modified residue" description="Phosphoserine" evidence="15 16">
    <location>
        <position position="1033"/>
    </location>
</feature>
<feature type="modified residue" description="Phosphoserine" evidence="15 16">
    <location>
        <position position="1162"/>
    </location>
</feature>
<feature type="modified residue" description="Phosphoserine" evidence="15">
    <location>
        <position position="1476"/>
    </location>
</feature>
<feature type="cross-link" description="Glycyl lysine isopeptide (Lys-Gly) (interchain with G-Cter in SUMO2)" evidence="19">
    <location>
        <position position="747"/>
    </location>
</feature>
<feature type="cross-link" description="Glycyl lysine isopeptide (Lys-Gly) (interchain with G-Cter in SUMO2)" evidence="17 18 19">
    <location>
        <position position="1092"/>
    </location>
</feature>
<feature type="splice variant" id="VSP_061439" description="In isoform 4.">
    <location>
        <begin position="1230"/>
        <end position="1359"/>
    </location>
</feature>
<feature type="splice variant" id="VSP_061440" description="In isoform 1.">
    <location>
        <begin position="1436"/>
        <end position="1509"/>
    </location>
</feature>
<feature type="sequence variant" id="VAR_082288" description="In SHUVER; uncertain significance; dbSNP:rs1603105985." evidence="9">
    <original>P</original>
    <variation>L</variation>
    <location>
        <position position="32"/>
    </location>
</feature>
<feature type="sequence variant" id="VAR_061020" description="In dbSNP:rs4830173.">
    <original>L</original>
    <variation>F</variation>
    <location>
        <position position="111"/>
    </location>
</feature>
<feature type="sequence variant" id="VAR_037467" description="In dbSNP:rs5932715.">
    <original>G</original>
    <variation>S</variation>
    <location>
        <position position="209"/>
    </location>
</feature>
<feature type="sequence variant" id="VAR_080909" description="Found in a patient with Uruguay faciocardiomusculoskeletal syndrome; uncertain significance." evidence="7">
    <original>T</original>
    <variation>I</variation>
    <location>
        <position position="327"/>
    </location>
</feature>
<feature type="sequence variant" id="VAR_082289" description="In SHUVER; uncertain significance; dbSNP:rs1057521638." evidence="9">
    <original>S</original>
    <variation>F</variation>
    <location>
        <position position="496"/>
    </location>
</feature>
<feature type="sequence variant" id="VAR_089779" description="Found in a sterile man with oligoasthenoteratozoospermia; likely pathogenic; loss of nuclear localization; loss of interaction with SKP1." evidence="11">
    <location>
        <begin position="522"/>
        <end position="1785"/>
    </location>
</feature>
<feature type="sequence variant" id="VAR_082290" description="In SHUVER; uncertain significance; dbSNP:rs1488781894." evidence="9">
    <original>V</original>
    <variation>E</variation>
    <location>
        <position position="782"/>
    </location>
</feature>
<feature type="sequence variant" id="VAR_070559" description="In SHUVER; uncertain significance; dbSNP:rs398123004." evidence="6">
    <original>N</original>
    <variation>S</variation>
    <location>
        <position position="820"/>
    </location>
</feature>
<feature type="sequence variant" id="VAR_037468" description="In a breast cancer sample; somatic mutation." evidence="3">
    <original>G</original>
    <variation>D</variation>
    <location>
        <position position="832"/>
    </location>
</feature>
<feature type="sequence variant" id="VAR_089780" description="Found in sterile men with non-obstructive azoospermia; uncertain significance; no effect on nuclear localization; no effect on interaction with SKP1; dbSNP:rs750640150." evidence="10 11">
    <original>V</original>
    <variation>G</variation>
    <location>
        <position position="872"/>
    </location>
</feature>
<feature type="sequence variant" id="VAR_089781" description="Found in sterile men with non-obstructive azoospermia or oligoasthenoteratozoospermia; uncertain significance; no effect on nuclear localization; no effect on interaction with SKP1; dbSNP:rs201843717." evidence="11">
    <original>R</original>
    <variation>Q</variation>
    <location>
        <position position="890"/>
    </location>
</feature>
<feature type="sequence variant" id="VAR_089782" description="Found in a sterile man with non-obstructive azoospermia; uncertain significance; no effect on nuclear localization; no effect on interaction with SKP1." evidence="11">
    <original>D</original>
    <variation>G</variation>
    <location>
        <position position="1055"/>
    </location>
</feature>
<feature type="sequence variant" id="VAR_089783" description="Found in a sterile man with non-obstructive azoospermia; uncertain significance; no effect on nuclear localization; no effect on interaction with SKP1; dbSNP:rs774565678." evidence="11">
    <original>P</original>
    <variation>L</variation>
    <location>
        <position position="1115"/>
    </location>
</feature>
<feature type="mutagenesis site" description="Strongly reduced repressor activity. Interferes with CTBP1 binding." evidence="4">
    <original>DL</original>
    <variation>AS</variation>
    <location>
        <begin position="623"/>
        <end position="624"/>
    </location>
</feature>
<feature type="mutagenesis site" description="Slightly inhibits interaction with PCGF1." evidence="5">
    <original>L</original>
    <variation>D</variation>
    <variation>R</variation>
    <location>
        <position position="1739"/>
    </location>
</feature>
<feature type="sequence conflict" description="In Ref. 4; BAC85922." evidence="12" ref="4">
    <original>V</original>
    <variation>A</variation>
    <location>
        <position position="1638"/>
    </location>
</feature>
<feature type="strand" evidence="20">
    <location>
        <begin position="1670"/>
        <end position="1677"/>
    </location>
</feature>
<feature type="strand" evidence="20">
    <location>
        <begin position="1683"/>
        <end position="1685"/>
    </location>
</feature>
<feature type="strand" evidence="20">
    <location>
        <begin position="1694"/>
        <end position="1698"/>
    </location>
</feature>
<feature type="helix" evidence="20">
    <location>
        <begin position="1699"/>
        <end position="1706"/>
    </location>
</feature>
<feature type="helix" evidence="20">
    <location>
        <begin position="1710"/>
        <end position="1716"/>
    </location>
</feature>
<feature type="strand" evidence="20">
    <location>
        <begin position="1722"/>
        <end position="1726"/>
    </location>
</feature>
<feature type="helix" evidence="20">
    <location>
        <begin position="1727"/>
        <end position="1734"/>
    </location>
</feature>
<feature type="strand" evidence="20">
    <location>
        <begin position="1738"/>
        <end position="1740"/>
    </location>
</feature>
<feature type="turn" evidence="20">
    <location>
        <begin position="1742"/>
        <end position="1744"/>
    </location>
</feature>
<feature type="strand" evidence="20">
    <location>
        <begin position="1760"/>
        <end position="1765"/>
    </location>
</feature>
<feature type="helix" evidence="20">
    <location>
        <begin position="1768"/>
        <end position="1773"/>
    </location>
</feature>
<feature type="strand" evidence="20">
    <location>
        <begin position="1777"/>
        <end position="1781"/>
    </location>
</feature>
<organism>
    <name type="scientific">Homo sapiens</name>
    <name type="common">Human</name>
    <dbReference type="NCBI Taxonomy" id="9606"/>
    <lineage>
        <taxon>Eukaryota</taxon>
        <taxon>Metazoa</taxon>
        <taxon>Chordata</taxon>
        <taxon>Craniata</taxon>
        <taxon>Vertebrata</taxon>
        <taxon>Euteleostomi</taxon>
        <taxon>Mammalia</taxon>
        <taxon>Eutheria</taxon>
        <taxon>Euarchontoglires</taxon>
        <taxon>Primates</taxon>
        <taxon>Haplorrhini</taxon>
        <taxon>Catarrhini</taxon>
        <taxon>Hominidae</taxon>
        <taxon>Homo</taxon>
    </lineage>
</organism>
<dbReference type="EMBL" id="AL034405">
    <property type="status" value="NOT_ANNOTATED_CDS"/>
    <property type="molecule type" value="Genomic_DNA"/>
</dbReference>
<dbReference type="EMBL" id="AL136450">
    <property type="status" value="NOT_ANNOTATED_CDS"/>
    <property type="molecule type" value="Genomic_DNA"/>
</dbReference>
<dbReference type="EMBL" id="KF459398">
    <property type="status" value="NOT_ANNOTATED_CDS"/>
    <property type="molecule type" value="Genomic_DNA"/>
</dbReference>
<dbReference type="EMBL" id="KF459400">
    <property type="status" value="NOT_ANNOTATED_CDS"/>
    <property type="molecule type" value="Genomic_DNA"/>
</dbReference>
<dbReference type="EMBL" id="KF510634">
    <property type="status" value="NOT_ANNOTATED_CDS"/>
    <property type="molecule type" value="Genomic_DNA"/>
</dbReference>
<dbReference type="EMBL" id="Z82208">
    <property type="status" value="NOT_ANNOTATED_CDS"/>
    <property type="molecule type" value="Genomic_DNA"/>
</dbReference>
<dbReference type="EMBL" id="AK074089">
    <property type="protein sequence ID" value="BAB84915.1"/>
    <property type="molecule type" value="mRNA"/>
</dbReference>
<dbReference type="EMBL" id="AL096777">
    <property type="protein sequence ID" value="CAB46626.1"/>
    <property type="status" value="ALT_INIT"/>
    <property type="molecule type" value="mRNA"/>
</dbReference>
<dbReference type="EMBL" id="AK124676">
    <property type="protein sequence ID" value="BAC85922.1"/>
    <property type="status" value="ALT_INIT"/>
    <property type="molecule type" value="mRNA"/>
</dbReference>
<dbReference type="CCDS" id="CCDS14616.1">
    <molecule id="Q5H9F3-1"/>
</dbReference>
<dbReference type="CCDS" id="CCDS94663.1">
    <molecule id="Q5H9F3-3"/>
</dbReference>
<dbReference type="RefSeq" id="NP_001171701.1">
    <molecule id="Q5H9F3-3"/>
    <property type="nucleotide sequence ID" value="NM_001184772.3"/>
</dbReference>
<dbReference type="RefSeq" id="NP_001366379.1">
    <molecule id="Q5H9F3-3"/>
    <property type="nucleotide sequence ID" value="NM_001379450.1"/>
</dbReference>
<dbReference type="RefSeq" id="NP_001366380.1">
    <molecule id="Q5H9F3-3"/>
    <property type="nucleotide sequence ID" value="NM_001379451.1"/>
</dbReference>
<dbReference type="RefSeq" id="NP_068765.3">
    <molecule id="Q5H9F3-1"/>
    <property type="nucleotide sequence ID" value="NM_021946.4"/>
</dbReference>
<dbReference type="RefSeq" id="XP_005262509.2">
    <property type="nucleotide sequence ID" value="XM_005262452.4"/>
</dbReference>
<dbReference type="RefSeq" id="XP_005262510.2">
    <molecule id="Q5H9F3-3"/>
    <property type="nucleotide sequence ID" value="XM_005262453.5"/>
</dbReference>
<dbReference type="RefSeq" id="XP_005262511.2">
    <property type="nucleotide sequence ID" value="XM_005262454.3"/>
</dbReference>
<dbReference type="RefSeq" id="XP_005262512.2">
    <molecule id="Q5H9F3-3"/>
    <property type="nucleotide sequence ID" value="XM_005262455.5"/>
</dbReference>
<dbReference type="RefSeq" id="XP_005262513.2">
    <molecule id="Q5H9F3-4"/>
    <property type="nucleotide sequence ID" value="XM_005262456.5"/>
</dbReference>
<dbReference type="RefSeq" id="XP_006724839.1">
    <molecule id="Q5H9F3-3"/>
    <property type="nucleotide sequence ID" value="XM_006724776.4"/>
</dbReference>
<dbReference type="RefSeq" id="XP_006724840.1">
    <molecule id="Q5H9F3-3"/>
    <property type="nucleotide sequence ID" value="XM_006724777.4"/>
</dbReference>
<dbReference type="RefSeq" id="XP_016885210.1">
    <molecule id="Q5H9F3-3"/>
    <property type="nucleotide sequence ID" value="XM_017029721.2"/>
</dbReference>
<dbReference type="RefSeq" id="XP_016885211.1">
    <molecule id="Q5H9F3-3"/>
    <property type="nucleotide sequence ID" value="XM_017029722.2"/>
</dbReference>
<dbReference type="RefSeq" id="XP_047298295.1">
    <molecule id="Q5H9F3-3"/>
    <property type="nucleotide sequence ID" value="XM_047442339.1"/>
</dbReference>
<dbReference type="RefSeq" id="XP_047298296.1">
    <molecule id="Q5H9F3-3"/>
    <property type="nucleotide sequence ID" value="XM_047442340.1"/>
</dbReference>
<dbReference type="RefSeq" id="XP_047298297.1">
    <molecule id="Q5H9F3-3"/>
    <property type="nucleotide sequence ID" value="XM_047442341.1"/>
</dbReference>
<dbReference type="RefSeq" id="XP_047298298.1">
    <molecule id="Q5H9F3-4"/>
    <property type="nucleotide sequence ID" value="XM_047442342.1"/>
</dbReference>
<dbReference type="RefSeq" id="XP_047298299.1">
    <molecule id="Q5H9F3-4"/>
    <property type="nucleotide sequence ID" value="XM_047442343.1"/>
</dbReference>
<dbReference type="RefSeq" id="XP_047298300.1">
    <molecule id="Q5H9F3-4"/>
    <property type="nucleotide sequence ID" value="XM_047442344.1"/>
</dbReference>
<dbReference type="RefSeq" id="XP_047298301.1">
    <molecule id="Q5H9F3-4"/>
    <property type="nucleotide sequence ID" value="XM_047442345.1"/>
</dbReference>
<dbReference type="RefSeq" id="XP_054183515.1">
    <molecule id="Q5H9F3-3"/>
    <property type="nucleotide sequence ID" value="XM_054327540.1"/>
</dbReference>
<dbReference type="RefSeq" id="XP_054183516.1">
    <molecule id="Q5H9F3-3"/>
    <property type="nucleotide sequence ID" value="XM_054327541.1"/>
</dbReference>
<dbReference type="RefSeq" id="XP_054183517.1">
    <molecule id="Q5H9F3-3"/>
    <property type="nucleotide sequence ID" value="XM_054327542.1"/>
</dbReference>
<dbReference type="RefSeq" id="XP_054183518.1">
    <molecule id="Q5H9F3-3"/>
    <property type="nucleotide sequence ID" value="XM_054327543.1"/>
</dbReference>
<dbReference type="RefSeq" id="XP_054183519.1">
    <molecule id="Q5H9F3-3"/>
    <property type="nucleotide sequence ID" value="XM_054327544.1"/>
</dbReference>
<dbReference type="RefSeq" id="XP_054183520.1">
    <molecule id="Q5H9F3-3"/>
    <property type="nucleotide sequence ID" value="XM_054327545.1"/>
</dbReference>
<dbReference type="RefSeq" id="XP_054183521.1">
    <molecule id="Q5H9F3-3"/>
    <property type="nucleotide sequence ID" value="XM_054327546.1"/>
</dbReference>
<dbReference type="RefSeq" id="XP_054183522.1">
    <molecule id="Q5H9F3-3"/>
    <property type="nucleotide sequence ID" value="XM_054327547.1"/>
</dbReference>
<dbReference type="RefSeq" id="XP_054183523.1">
    <molecule id="Q5H9F3-3"/>
    <property type="nucleotide sequence ID" value="XM_054327548.1"/>
</dbReference>
<dbReference type="RefSeq" id="XP_054183524.1">
    <molecule id="Q5H9F3-4"/>
    <property type="nucleotide sequence ID" value="XM_054327549.1"/>
</dbReference>
<dbReference type="RefSeq" id="XP_054183525.1">
    <molecule id="Q5H9F3-4"/>
    <property type="nucleotide sequence ID" value="XM_054327550.1"/>
</dbReference>
<dbReference type="RefSeq" id="XP_054183526.1">
    <molecule id="Q5H9F3-4"/>
    <property type="nucleotide sequence ID" value="XM_054327551.1"/>
</dbReference>
<dbReference type="RefSeq" id="XP_054183527.1">
    <molecule id="Q5H9F3-4"/>
    <property type="nucleotide sequence ID" value="XM_054327552.1"/>
</dbReference>
<dbReference type="RefSeq" id="XP_054183528.1">
    <molecule id="Q5H9F3-4"/>
    <property type="nucleotide sequence ID" value="XM_054327553.1"/>
</dbReference>
<dbReference type="PDB" id="4HPM">
    <property type="method" value="X-ray"/>
    <property type="resolution" value="1.85 A"/>
    <property type="chains" value="A/C=1668-1785"/>
</dbReference>
<dbReference type="PDB" id="5JH5">
    <property type="method" value="X-ray"/>
    <property type="resolution" value="2.55 A"/>
    <property type="chains" value="D=1668-1785"/>
</dbReference>
<dbReference type="PDBsum" id="4HPM"/>
<dbReference type="PDBsum" id="5JH5"/>
<dbReference type="SMR" id="Q5H9F3"/>
<dbReference type="BioGRID" id="121961">
    <property type="interactions" value="88"/>
</dbReference>
<dbReference type="ComplexPortal" id="CPX-2627">
    <property type="entry name" value="Non-canonical polycomb repressive complex 1.1, RING2-PCGF1-RYBP variant"/>
</dbReference>
<dbReference type="CORUM" id="Q5H9F3"/>
<dbReference type="DIP" id="DIP-60148N"/>
<dbReference type="FunCoup" id="Q5H9F3">
    <property type="interactions" value="1676"/>
</dbReference>
<dbReference type="IntAct" id="Q5H9F3">
    <property type="interactions" value="40"/>
</dbReference>
<dbReference type="MINT" id="Q5H9F3"/>
<dbReference type="STRING" id="9606.ENSP00000437775"/>
<dbReference type="GlyCosmos" id="Q5H9F3">
    <property type="glycosylation" value="5 sites, 1 glycan"/>
</dbReference>
<dbReference type="GlyGen" id="Q5H9F3">
    <property type="glycosylation" value="17 sites, 1 O-linked glycan (9 sites)"/>
</dbReference>
<dbReference type="iPTMnet" id="Q5H9F3"/>
<dbReference type="PhosphoSitePlus" id="Q5H9F3"/>
<dbReference type="BioMuta" id="BCORL1"/>
<dbReference type="DMDM" id="74762178"/>
<dbReference type="jPOST" id="Q5H9F3"/>
<dbReference type="MassIVE" id="Q5H9F3"/>
<dbReference type="PaxDb" id="9606-ENSP00000437775"/>
<dbReference type="PeptideAtlas" id="Q5H9F3"/>
<dbReference type="ProteomicsDB" id="62886">
    <molecule id="Q5H9F3-1"/>
</dbReference>
<dbReference type="ProteomicsDB" id="62888">
    <molecule id="Q5H9F3-3"/>
</dbReference>
<dbReference type="Pumba" id="Q5H9F3"/>
<dbReference type="Antibodypedia" id="30129">
    <property type="antibodies" value="77 antibodies from 15 providers"/>
</dbReference>
<dbReference type="DNASU" id="63035"/>
<dbReference type="Ensembl" id="ENST00000218147.11">
    <molecule id="Q5H9F3-1"/>
    <property type="protein sequence ID" value="ENSP00000218147.7"/>
    <property type="gene ID" value="ENSG00000085185.16"/>
</dbReference>
<dbReference type="Ensembl" id="ENST00000540052.6">
    <molecule id="Q5H9F3-3"/>
    <property type="protein sequence ID" value="ENSP00000437775.2"/>
    <property type="gene ID" value="ENSG00000085185.16"/>
</dbReference>
<dbReference type="GeneID" id="63035"/>
<dbReference type="KEGG" id="hsa:63035"/>
<dbReference type="MANE-Select" id="ENST00000540052.6">
    <property type="protein sequence ID" value="ENSP00000437775.2"/>
    <property type="RefSeq nucleotide sequence ID" value="NM_001379451.1"/>
    <property type="RefSeq protein sequence ID" value="NP_001366380.1"/>
</dbReference>
<dbReference type="UCSC" id="uc022cdu.1">
    <molecule id="Q5H9F3-3"/>
    <property type="organism name" value="human"/>
</dbReference>
<dbReference type="AGR" id="HGNC:25657"/>
<dbReference type="CTD" id="63035"/>
<dbReference type="DisGeNET" id="63035"/>
<dbReference type="GeneCards" id="BCORL1"/>
<dbReference type="HGNC" id="HGNC:25657">
    <property type="gene designation" value="BCORL1"/>
</dbReference>
<dbReference type="HPA" id="ENSG00000085185">
    <property type="expression patterns" value="Low tissue specificity"/>
</dbReference>
<dbReference type="MalaCards" id="BCORL1"/>
<dbReference type="MIM" id="300688">
    <property type="type" value="gene"/>
</dbReference>
<dbReference type="MIM" id="301029">
    <property type="type" value="phenotype"/>
</dbReference>
<dbReference type="neXtProt" id="NX_Q5H9F3"/>
<dbReference type="OpenTargets" id="ENSG00000085185"/>
<dbReference type="Orphanet" id="528084">
    <property type="disease" value="Non-specific syndromic intellectual disability"/>
</dbReference>
<dbReference type="VEuPathDB" id="HostDB:ENSG00000085185"/>
<dbReference type="eggNOG" id="ENOG502QSMY">
    <property type="taxonomic scope" value="Eukaryota"/>
</dbReference>
<dbReference type="GeneTree" id="ENSGT00940000153737"/>
<dbReference type="InParanoid" id="Q5H9F3"/>
<dbReference type="OMA" id="EFQSWNS"/>
<dbReference type="OrthoDB" id="3666223at2759"/>
<dbReference type="PAN-GO" id="Q5H9F3">
    <property type="GO annotations" value="3 GO annotations based on evolutionary models"/>
</dbReference>
<dbReference type="PhylomeDB" id="Q5H9F3"/>
<dbReference type="TreeFam" id="TF333317"/>
<dbReference type="PathwayCommons" id="Q5H9F3"/>
<dbReference type="SignaLink" id="Q5H9F3"/>
<dbReference type="SIGNOR" id="Q5H9F3"/>
<dbReference type="BioGRID-ORCS" id="63035">
    <property type="hits" value="21 hits in 794 CRISPR screens"/>
</dbReference>
<dbReference type="CD-CODE" id="91857CE7">
    <property type="entry name" value="Nucleolus"/>
</dbReference>
<dbReference type="ChiTaRS" id="BCORL1">
    <property type="organism name" value="human"/>
</dbReference>
<dbReference type="EvolutionaryTrace" id="Q5H9F3"/>
<dbReference type="GenomeRNAi" id="63035"/>
<dbReference type="Pharos" id="Q5H9F3">
    <property type="development level" value="Tbio"/>
</dbReference>
<dbReference type="PRO" id="PR:Q5H9F3"/>
<dbReference type="Proteomes" id="UP000005640">
    <property type="component" value="Chromosome X"/>
</dbReference>
<dbReference type="RNAct" id="Q5H9F3">
    <property type="molecule type" value="protein"/>
</dbReference>
<dbReference type="Bgee" id="ENSG00000085185">
    <property type="expression patterns" value="Expressed in cervix squamous epithelium and 191 other cell types or tissues"/>
</dbReference>
<dbReference type="ExpressionAtlas" id="Q5H9F3">
    <property type="expression patterns" value="baseline and differential"/>
</dbReference>
<dbReference type="GO" id="GO:0005654">
    <property type="term" value="C:nucleoplasm"/>
    <property type="evidence" value="ECO:0000314"/>
    <property type="project" value="HPA"/>
</dbReference>
<dbReference type="GO" id="GO:0005634">
    <property type="term" value="C:nucleus"/>
    <property type="evidence" value="ECO:0000318"/>
    <property type="project" value="GO_Central"/>
</dbReference>
<dbReference type="GO" id="GO:0005886">
    <property type="term" value="C:plasma membrane"/>
    <property type="evidence" value="ECO:0000314"/>
    <property type="project" value="HPA"/>
</dbReference>
<dbReference type="GO" id="GO:0003714">
    <property type="term" value="F:transcription corepressor activity"/>
    <property type="evidence" value="ECO:0000318"/>
    <property type="project" value="GO_Central"/>
</dbReference>
<dbReference type="GO" id="GO:0006325">
    <property type="term" value="P:chromatin organization"/>
    <property type="evidence" value="ECO:0007669"/>
    <property type="project" value="UniProtKB-KW"/>
</dbReference>
<dbReference type="GO" id="GO:0000122">
    <property type="term" value="P:negative regulation of transcription by RNA polymerase II"/>
    <property type="evidence" value="ECO:0000318"/>
    <property type="project" value="GO_Central"/>
</dbReference>
<dbReference type="CDD" id="cd14260">
    <property type="entry name" value="PUFD_like_1"/>
    <property type="match status" value="1"/>
</dbReference>
<dbReference type="FunFam" id="1.25.40.20:FF:000032">
    <property type="entry name" value="BCL-6 corepressor isoform X1"/>
    <property type="match status" value="1"/>
</dbReference>
<dbReference type="FunFam" id="3.10.260.40:FF:000001">
    <property type="entry name" value="BCL-6 corepressor isoform X2"/>
    <property type="match status" value="1"/>
</dbReference>
<dbReference type="Gene3D" id="1.25.40.20">
    <property type="entry name" value="Ankyrin repeat-containing domain"/>
    <property type="match status" value="1"/>
</dbReference>
<dbReference type="Gene3D" id="3.10.260.40">
    <property type="entry name" value="BCL-6 corepressor, PCGF1 binding domain"/>
    <property type="match status" value="1"/>
</dbReference>
<dbReference type="IDEAL" id="IID00623"/>
<dbReference type="InterPro" id="IPR002110">
    <property type="entry name" value="Ankyrin_rpt"/>
</dbReference>
<dbReference type="InterPro" id="IPR036770">
    <property type="entry name" value="Ankyrin_rpt-contain_sf"/>
</dbReference>
<dbReference type="InterPro" id="IPR047144">
    <property type="entry name" value="BCOR-like"/>
</dbReference>
<dbReference type="InterPro" id="IPR032365">
    <property type="entry name" value="PUFD"/>
</dbReference>
<dbReference type="InterPro" id="IPR038227">
    <property type="entry name" value="PUFD_som_sf"/>
</dbReference>
<dbReference type="PANTHER" id="PTHR24117">
    <property type="entry name" value="AGAP007537-PB"/>
    <property type="match status" value="1"/>
</dbReference>
<dbReference type="PANTHER" id="PTHR24117:SF6">
    <property type="entry name" value="BCL-6 COREPRESSOR-LIKE PROTEIN 1"/>
    <property type="match status" value="1"/>
</dbReference>
<dbReference type="Pfam" id="PF12796">
    <property type="entry name" value="Ank_2"/>
    <property type="match status" value="1"/>
</dbReference>
<dbReference type="Pfam" id="PF16553">
    <property type="entry name" value="PUFD"/>
    <property type="match status" value="1"/>
</dbReference>
<dbReference type="SMART" id="SM00248">
    <property type="entry name" value="ANK"/>
    <property type="match status" value="3"/>
</dbReference>
<dbReference type="SUPFAM" id="SSF48403">
    <property type="entry name" value="Ankyrin repeat"/>
    <property type="match status" value="1"/>
</dbReference>
<dbReference type="PROSITE" id="PS50297">
    <property type="entry name" value="ANK_REP_REGION"/>
    <property type="match status" value="1"/>
</dbReference>
<dbReference type="PROSITE" id="PS50088">
    <property type="entry name" value="ANK_REPEAT"/>
    <property type="match status" value="2"/>
</dbReference>
<comment type="function">
    <text evidence="4">Transcriptional corepressor. May specifically inhibit gene expression when recruited to promoter regions by sequence-specific DNA-binding proteins such as BCL6. This repression may be mediated at least in part by histone deacetylase activities which can associate with this corepressor.</text>
</comment>
<comment type="subunit">
    <text evidence="4 5 8 11">Interacts with PCGF1, forming heterodimers (PubMed:23523425, PubMed:27568929). The PCGF1-BCORL1 heterodimeric complex interacts with the KDM2B-SKP1 heterodimeric complex to form a homotetrameric polycomb repression complex 1 (PRC1.1) (PubMed:27568929). Interacts with SKP1 (PubMed:38342987). Interacts with CTBP1, HDAC4, HDAC5 and HDAC7 (PubMed:17379597).</text>
</comment>
<comment type="interaction">
    <interactant intactId="EBI-16041827">
        <id>Q5H9F3-1</id>
    </interactant>
    <interactant intactId="EBI-16041863">
        <id>Q9BSM1-1</id>
        <label>PCGF1</label>
    </interactant>
    <organismsDiffer>false</organismsDiffer>
    <experiments>6</experiments>
</comment>
<comment type="subcellular location">
    <subcellularLocation>
        <location evidence="4 11">Nucleus</location>
    </subcellularLocation>
</comment>
<comment type="alternative products">
    <event type="alternative splicing"/>
    <isoform>
        <id>Q5H9F3-3</id>
        <name>3</name>
        <sequence type="displayed"/>
    </isoform>
    <isoform>
        <id>Q5H9F3-1</id>
        <name>1</name>
        <sequence type="described" ref="VSP_061440"/>
    </isoform>
    <isoform>
        <id>Q5H9F3-4</id>
        <name>4</name>
        <sequence type="described" ref="VSP_061439"/>
    </isoform>
</comment>
<comment type="tissue specificity">
    <text evidence="4 11">Detected in testis and prostate. Detected at lower levels in peripheral blood leukocytes and spleen. Mainly expressed in the spermatogonia and primary spermatocytes (PubMed:38342987).</text>
</comment>
<comment type="disease" evidence="6 9">
    <disease id="DI-05604">
        <name>Shukla-Vernon syndrome</name>
        <acronym>SHUVER</acronym>
        <description>An X-linked neurodevelopmental disorder manifesting in affected males with intellectual and learning disability, motor and language delay, autism spectrum disorder, attention deficit and hyperactivity disorder, and dysmorphic features. Some patients may have seizures and/or cerebellar atrophy on brain imaging. Carrier females may have mild disease manifestations.</description>
        <dbReference type="MIM" id="301029"/>
    </disease>
    <text>The disease may be caused by variants affecting the gene represented in this entry.</text>
</comment>
<comment type="disease">
    <text evidence="11">Defects in BCORL1 may be a cause of male infertility due to oligoasthenoteratozoospermia (PubMed:38342987). Affected individuals have a reduced sperm count, decreased progressive sperm motility, and a low proportion of morphologically normal sperm. In some cases, infertility is due to non-obstructive azoospermia.</text>
</comment>
<comment type="similarity">
    <text evidence="12">Belongs to the BCOR family.</text>
</comment>
<comment type="sequence caution" evidence="12">
    <conflict type="erroneous initiation">
        <sequence resource="EMBL-CDS" id="BAC85922"/>
    </conflict>
    <text>Truncated N-terminus.</text>
</comment>
<comment type="sequence caution" evidence="12">
    <conflict type="erroneous initiation">
        <sequence resource="EMBL-CDS" id="CAB46626"/>
    </conflict>
    <text>Truncated N-terminus.</text>
</comment>
<evidence type="ECO:0000255" key="1"/>
<evidence type="ECO:0000256" key="2">
    <source>
        <dbReference type="SAM" id="MobiDB-lite"/>
    </source>
</evidence>
<evidence type="ECO:0000269" key="3">
    <source>
    </source>
</evidence>
<evidence type="ECO:0000269" key="4">
    <source>
    </source>
</evidence>
<evidence type="ECO:0000269" key="5">
    <source>
    </source>
</evidence>
<evidence type="ECO:0000269" key="6">
    <source>
    </source>
</evidence>
<evidence type="ECO:0000269" key="7">
    <source>
    </source>
</evidence>
<evidence type="ECO:0000269" key="8">
    <source>
    </source>
</evidence>
<evidence type="ECO:0000269" key="9">
    <source>
    </source>
</evidence>
<evidence type="ECO:0000269" key="10">
    <source>
    </source>
</evidence>
<evidence type="ECO:0000269" key="11">
    <source>
    </source>
</evidence>
<evidence type="ECO:0000305" key="12"/>
<evidence type="ECO:0000312" key="13">
    <source>
        <dbReference type="HGNC" id="HGNC:25657"/>
    </source>
</evidence>
<evidence type="ECO:0007744" key="14">
    <source>
        <dbReference type="PDB" id="5JH5"/>
    </source>
</evidence>
<evidence type="ECO:0007744" key="15">
    <source>
    </source>
</evidence>
<evidence type="ECO:0007744" key="16">
    <source>
    </source>
</evidence>
<evidence type="ECO:0007744" key="17">
    <source>
    </source>
</evidence>
<evidence type="ECO:0007744" key="18">
    <source>
    </source>
</evidence>
<evidence type="ECO:0007744" key="19">
    <source>
    </source>
</evidence>
<evidence type="ECO:0007829" key="20">
    <source>
        <dbReference type="PDB" id="4HPM"/>
    </source>
</evidence>
<keyword id="KW-0002">3D-structure</keyword>
<keyword id="KW-0025">Alternative splicing</keyword>
<keyword id="KW-0040">ANK repeat</keyword>
<keyword id="KW-1268">Autism spectrum disorder</keyword>
<keyword id="KW-0156">Chromatin regulator</keyword>
<keyword id="KW-0225">Disease variant</keyword>
<keyword id="KW-0991">Intellectual disability</keyword>
<keyword id="KW-1017">Isopeptide bond</keyword>
<keyword id="KW-0539">Nucleus</keyword>
<keyword id="KW-0597">Phosphoprotein</keyword>
<keyword id="KW-1267">Proteomics identification</keyword>
<keyword id="KW-1185">Reference proteome</keyword>
<keyword id="KW-0677">Repeat</keyword>
<keyword id="KW-0678">Repressor</keyword>
<keyword id="KW-0804">Transcription</keyword>
<keyword id="KW-0805">Transcription regulation</keyword>
<keyword id="KW-0832">Ubl conjugation</keyword>
<protein>
    <recommendedName>
        <fullName evidence="12">BCL-6 corepressor-like protein 1</fullName>
        <shortName>BCoR-L1</shortName>
        <shortName>BCoR-like protein 1</shortName>
    </recommendedName>
</protein>
<accession>Q5H9F3</accession>
<accession>B5MDQ8</accession>
<accession>Q5H9F2</accession>
<accession>Q5H9F4</accession>
<accession>Q6ZVE0</accession>
<accession>Q8TEN3</accession>
<accession>Q9Y528</accession>
<sequence length="1785" mass="190561">MISTAPLYSGVHNWTSSDRIRMCGINEERRAPLSDEESTTGDCQHFGSQEFCVSSSFSKVELTAVGSGSNARGADPDGSATEKLGHKSEDKPDDPQPKMDYAGNVAEAEGLLVPLSSPGDGLKLPASDSAEASNSRADCSWTPLNTQMSKQVDCSPAGVKALDSRQGVGEKNTFILATLGTGVPVEGTLPLVTTNFSPLPAPICPPAPGSASVPHSVPDAFQVPLSVPAPVPHSGLVPVQVATSVPAPSPPLAPVPALAPAPPSVPTLISDSNPLSVSASVLVPVPASAPPSGPVPLSAPAPAPLSVPVSAPPLALIQAPVPPSAPTLVLAPVPTPVLAPMPASTPPAAPAPPSVPMPTPTPSSGPPSTPTLIPAFAPTPVPAPTPAPIFTPAPTPMPAATPAAIPTSAPIPASFSLSRVCFPAAQAPAMQKVPLSFQPGTVLTPSQPLVYIPPPSCGQPLSVATLPTTLGVSSTLTLPVLPSYLQDRCLPGVLASPELRSYPYAFSVARPLTSDSKLVSLEVNRLPCTSPSGSTTTQPAPDGVPGPLADTSLVTASAKVLPTPQPLLPAPSGSSAPPHPAKMPSGTEQQTEGTSVTFSPLKSPPQLEREMASPPECSEMPLDLSSKSNRQKLPLPNQRKTPPMPVLTPVHTSSKALLSTVLSRSQRTTQAAGGNVTSCLGSTSSPFVIFPEIVRNGDPSTWVKNSTALISTIPGTYVGVANPVPASLLLNKDPNLGLNRDPRHLPKQEPISIIDQGEPKGTGATCGKKGSQAGAEGQPSTVKRYTPARIAPGLPGCQTKELSLWKPTGPANIYPRCSVNGKPTSTQVLPVGWSPYHQASLLSIGISSAGQLTPSQGAPIRPTSVVSEFSGVPSLSSSEAVHGLPEGQPRPGGSFVPEQDPVTKNKTCRIAAKPYEEQVNPVLLTLSPQTGTLALSVQPSGGDIRMNQGPEESESHLCSDSTPKMEGPQGACGLKLAGDTKPKNQVLATYMSHELVLATPQNLPKMPELPLLPHDSHPKELILDVVPSSRRGSSTERPQLGSQVDLGRVKMEKVDGDVVFNLATCFRADGLPVAPQRGQAEVRAKAGQARVKQESVGVFACKNKWQPDDVTESLPPKKMKCGKEKDSEEQQLQPQAKAVVRSSHRPKCRKLPSDPQESTKKSPRGASDSGKEHNGVRGKHKHRKPTKPESQSPGKRADSHEEGSLEKKAKSSFRDFIPVVLSTRTRSQSGSICSSFAGMADSDMGSQEVFPTEEEEEVTPTPAKRRKVRKTQRDTQYRSHHAQDKSLLSQGRRHLWRAREMPWRTEAARQMWDTNEEEEEEEEEGLLKRKKRRRQKSRKYQTGEYLTEQEDEQRRKGRADLKARKQKTSSSQSLEHRLRNRNLLLPNKVQGISDSPNGFLPNNLEEPACLENSEKPSGKRKCKTKHMATVSEEAKGKGRWSQQKTRSPKSPTPVKPTEPCTPSKSRSASSEEASESPTARQIPPEARRLIVNKNAGETLLQRAARLGYKDVVLYCLQKDSEDVNHRDNAGYTALHEACSRGWTDILNILLEHGANVNCSAQDGTRPVHDAVVNDNLETIWLLLSYGADPTLATYSGQTAMKLASSDTMKRFLSDHLSDLQGRAEGDPGVSWDFYSSSVLEEKDGFACDLLHNPPGSSDQEGDDPMEEDDFMFELSDKPLLPCYNLQVSVSRGPCNWFLFSDVLKRLKLSSRIFQARFPHFEITTMPKAEFYRQVASSQLLTPAERPGGLDDRSPPGSSETVELVRYEPDLLRLLGSEVEFQSCNS</sequence>